<keyword id="KW-0240">DNA-directed RNA polymerase</keyword>
<keyword id="KW-0548">Nucleotidyltransferase</keyword>
<keyword id="KW-1185">Reference proteome</keyword>
<keyword id="KW-0804">Transcription</keyword>
<keyword id="KW-0808">Transferase</keyword>
<sequence>MYRNWTELIKPHTIELGGDETEIQRKATLVAEPLERGFGTTLGNALRRVLLSSLQGAAVSTVRIEGVLHEFSSVPGVIEDVTDIILNIKGLALRMESTGIKNIYLRVDKEGPVTAGMIECETGIEILNPDHHIATLNKSGTLDITMTVTTGKGYVRAQLNREDESYAIGDIPIDASYNPVKKVAYRVENARVGQQTDYDKLIMDIETNGVVTPEDALALAAKILQDQLNPFINFDDVPTAHDHEMEDRPQWNPNLFRKVDELELSVRSANCLKNDDIVYIGDLVQKSESEMLKTPNFGRKSLNEIKEVLDEMGLSLGMTLDTWPPENIDDLSKQFEEENF</sequence>
<feature type="chain" id="PRO_0000296830" description="DNA-directed RNA polymerase subunit alpha">
    <location>
        <begin position="1"/>
        <end position="340"/>
    </location>
</feature>
<feature type="region of interest" description="Alpha N-terminal domain (alpha-NTD)" evidence="1">
    <location>
        <begin position="1"/>
        <end position="235"/>
    </location>
</feature>
<feature type="region of interest" description="Alpha C-terminal domain (alpha-CTD)" evidence="1">
    <location>
        <begin position="251"/>
        <end position="340"/>
    </location>
</feature>
<comment type="function">
    <text evidence="1">DNA-dependent RNA polymerase catalyzes the transcription of DNA into RNA using the four ribonucleoside triphosphates as substrates.</text>
</comment>
<comment type="catalytic activity">
    <reaction evidence="1">
        <text>RNA(n) + a ribonucleoside 5'-triphosphate = RNA(n+1) + diphosphate</text>
        <dbReference type="Rhea" id="RHEA:21248"/>
        <dbReference type="Rhea" id="RHEA-COMP:14527"/>
        <dbReference type="Rhea" id="RHEA-COMP:17342"/>
        <dbReference type="ChEBI" id="CHEBI:33019"/>
        <dbReference type="ChEBI" id="CHEBI:61557"/>
        <dbReference type="ChEBI" id="CHEBI:140395"/>
        <dbReference type="EC" id="2.7.7.6"/>
    </reaction>
</comment>
<comment type="subunit">
    <text evidence="1">Homodimer. The RNAP catalytic core consists of 2 alpha, 1 beta, 1 beta' and 1 omega subunit. When a sigma factor is associated with the core the holoenzyme is formed, which can initiate transcription.</text>
</comment>
<comment type="domain">
    <text evidence="1">The N-terminal domain is essential for RNAP assembly and basal transcription, whereas the C-terminal domain is involved in interaction with transcriptional regulators and with upstream promoter elements.</text>
</comment>
<comment type="similarity">
    <text evidence="1">Belongs to the RNA polymerase alpha chain family.</text>
</comment>
<organism>
    <name type="scientific">Magnetococcus marinus (strain ATCC BAA-1437 / JCM 17883 / MC-1)</name>
    <dbReference type="NCBI Taxonomy" id="156889"/>
    <lineage>
        <taxon>Bacteria</taxon>
        <taxon>Pseudomonadati</taxon>
        <taxon>Pseudomonadota</taxon>
        <taxon>Alphaproteobacteria</taxon>
        <taxon>Magnetococcales</taxon>
        <taxon>Magnetococcaceae</taxon>
        <taxon>Magnetococcus</taxon>
    </lineage>
</organism>
<proteinExistence type="inferred from homology"/>
<dbReference type="EC" id="2.7.7.6" evidence="1"/>
<dbReference type="EMBL" id="CP000471">
    <property type="protein sequence ID" value="ABK43391.1"/>
    <property type="molecule type" value="Genomic_DNA"/>
</dbReference>
<dbReference type="RefSeq" id="WP_011712550.1">
    <property type="nucleotide sequence ID" value="NC_008576.1"/>
</dbReference>
<dbReference type="SMR" id="A0L5Z8"/>
<dbReference type="STRING" id="156889.Mmc1_0872"/>
<dbReference type="KEGG" id="mgm:Mmc1_0872"/>
<dbReference type="eggNOG" id="COG0202">
    <property type="taxonomic scope" value="Bacteria"/>
</dbReference>
<dbReference type="HOGENOM" id="CLU_053084_0_1_5"/>
<dbReference type="OrthoDB" id="9805706at2"/>
<dbReference type="Proteomes" id="UP000002586">
    <property type="component" value="Chromosome"/>
</dbReference>
<dbReference type="GO" id="GO:0005737">
    <property type="term" value="C:cytoplasm"/>
    <property type="evidence" value="ECO:0007669"/>
    <property type="project" value="UniProtKB-ARBA"/>
</dbReference>
<dbReference type="GO" id="GO:0000428">
    <property type="term" value="C:DNA-directed RNA polymerase complex"/>
    <property type="evidence" value="ECO:0007669"/>
    <property type="project" value="UniProtKB-KW"/>
</dbReference>
<dbReference type="GO" id="GO:0003677">
    <property type="term" value="F:DNA binding"/>
    <property type="evidence" value="ECO:0007669"/>
    <property type="project" value="UniProtKB-UniRule"/>
</dbReference>
<dbReference type="GO" id="GO:0003899">
    <property type="term" value="F:DNA-directed RNA polymerase activity"/>
    <property type="evidence" value="ECO:0007669"/>
    <property type="project" value="UniProtKB-UniRule"/>
</dbReference>
<dbReference type="GO" id="GO:0046983">
    <property type="term" value="F:protein dimerization activity"/>
    <property type="evidence" value="ECO:0007669"/>
    <property type="project" value="InterPro"/>
</dbReference>
<dbReference type="GO" id="GO:0006351">
    <property type="term" value="P:DNA-templated transcription"/>
    <property type="evidence" value="ECO:0007669"/>
    <property type="project" value="UniProtKB-UniRule"/>
</dbReference>
<dbReference type="CDD" id="cd06928">
    <property type="entry name" value="RNAP_alpha_NTD"/>
    <property type="match status" value="1"/>
</dbReference>
<dbReference type="FunFam" id="1.10.150.20:FF:000001">
    <property type="entry name" value="DNA-directed RNA polymerase subunit alpha"/>
    <property type="match status" value="1"/>
</dbReference>
<dbReference type="FunFam" id="2.170.120.12:FF:000001">
    <property type="entry name" value="DNA-directed RNA polymerase subunit alpha"/>
    <property type="match status" value="1"/>
</dbReference>
<dbReference type="Gene3D" id="1.10.150.20">
    <property type="entry name" value="5' to 3' exonuclease, C-terminal subdomain"/>
    <property type="match status" value="1"/>
</dbReference>
<dbReference type="Gene3D" id="2.170.120.12">
    <property type="entry name" value="DNA-directed RNA polymerase, insert domain"/>
    <property type="match status" value="1"/>
</dbReference>
<dbReference type="Gene3D" id="3.30.1360.10">
    <property type="entry name" value="RNA polymerase, RBP11-like subunit"/>
    <property type="match status" value="1"/>
</dbReference>
<dbReference type="HAMAP" id="MF_00059">
    <property type="entry name" value="RNApol_bact_RpoA"/>
    <property type="match status" value="1"/>
</dbReference>
<dbReference type="InterPro" id="IPR011262">
    <property type="entry name" value="DNA-dir_RNA_pol_insert"/>
</dbReference>
<dbReference type="InterPro" id="IPR011263">
    <property type="entry name" value="DNA-dir_RNA_pol_RpoA/D/Rpb3"/>
</dbReference>
<dbReference type="InterPro" id="IPR011773">
    <property type="entry name" value="DNA-dir_RpoA"/>
</dbReference>
<dbReference type="InterPro" id="IPR036603">
    <property type="entry name" value="RBP11-like"/>
</dbReference>
<dbReference type="InterPro" id="IPR011260">
    <property type="entry name" value="RNAP_asu_C"/>
</dbReference>
<dbReference type="InterPro" id="IPR036643">
    <property type="entry name" value="RNApol_insert_sf"/>
</dbReference>
<dbReference type="NCBIfam" id="NF003513">
    <property type="entry name" value="PRK05182.1-2"/>
    <property type="match status" value="1"/>
</dbReference>
<dbReference type="NCBIfam" id="NF003519">
    <property type="entry name" value="PRK05182.2-5"/>
    <property type="match status" value="1"/>
</dbReference>
<dbReference type="NCBIfam" id="TIGR02027">
    <property type="entry name" value="rpoA"/>
    <property type="match status" value="1"/>
</dbReference>
<dbReference type="Pfam" id="PF01000">
    <property type="entry name" value="RNA_pol_A_bac"/>
    <property type="match status" value="1"/>
</dbReference>
<dbReference type="Pfam" id="PF03118">
    <property type="entry name" value="RNA_pol_A_CTD"/>
    <property type="match status" value="1"/>
</dbReference>
<dbReference type="Pfam" id="PF01193">
    <property type="entry name" value="RNA_pol_L"/>
    <property type="match status" value="1"/>
</dbReference>
<dbReference type="SMART" id="SM00662">
    <property type="entry name" value="RPOLD"/>
    <property type="match status" value="1"/>
</dbReference>
<dbReference type="SUPFAM" id="SSF47789">
    <property type="entry name" value="C-terminal domain of RNA polymerase alpha subunit"/>
    <property type="match status" value="1"/>
</dbReference>
<dbReference type="SUPFAM" id="SSF56553">
    <property type="entry name" value="Insert subdomain of RNA polymerase alpha subunit"/>
    <property type="match status" value="1"/>
</dbReference>
<dbReference type="SUPFAM" id="SSF55257">
    <property type="entry name" value="RBP11-like subunits of RNA polymerase"/>
    <property type="match status" value="1"/>
</dbReference>
<protein>
    <recommendedName>
        <fullName evidence="1">DNA-directed RNA polymerase subunit alpha</fullName>
        <shortName evidence="1">RNAP subunit alpha</shortName>
        <ecNumber evidence="1">2.7.7.6</ecNumber>
    </recommendedName>
    <alternativeName>
        <fullName evidence="1">RNA polymerase subunit alpha</fullName>
    </alternativeName>
    <alternativeName>
        <fullName evidence="1">Transcriptase subunit alpha</fullName>
    </alternativeName>
</protein>
<evidence type="ECO:0000255" key="1">
    <source>
        <dbReference type="HAMAP-Rule" id="MF_00059"/>
    </source>
</evidence>
<gene>
    <name evidence="1" type="primary">rpoA</name>
    <name type="ordered locus">Mmc1_0872</name>
</gene>
<reference key="1">
    <citation type="journal article" date="2009" name="Appl. Environ. Microbiol.">
        <title>Complete genome sequence of the chemolithoautotrophic marine magnetotactic coccus strain MC-1.</title>
        <authorList>
            <person name="Schubbe S."/>
            <person name="Williams T.J."/>
            <person name="Xie G."/>
            <person name="Kiss H.E."/>
            <person name="Brettin T.S."/>
            <person name="Martinez D."/>
            <person name="Ross C.A."/>
            <person name="Schuler D."/>
            <person name="Cox B.L."/>
            <person name="Nealson K.H."/>
            <person name="Bazylinski D.A."/>
        </authorList>
    </citation>
    <scope>NUCLEOTIDE SEQUENCE [LARGE SCALE GENOMIC DNA]</scope>
    <source>
        <strain>ATCC BAA-1437 / JCM 17883 / MC-1</strain>
    </source>
</reference>
<accession>A0L5Z8</accession>
<name>RPOA_MAGMM</name>